<feature type="chain" id="PRO_0000201531" description="Magnesium transport protein CorA">
    <location>
        <begin position="1"/>
        <end position="316"/>
    </location>
</feature>
<feature type="topological domain" description="Cytoplasmic" evidence="3">
    <location>
        <begin position="1"/>
        <end position="254"/>
    </location>
</feature>
<feature type="transmembrane region" description="Helical" evidence="3">
    <location>
        <begin position="255"/>
        <end position="273"/>
    </location>
</feature>
<feature type="topological domain" description="Periplasmic" evidence="3">
    <location>
        <begin position="274"/>
        <end position="287"/>
    </location>
</feature>
<feature type="transmembrane region" description="Helical" evidence="3">
    <location>
        <begin position="288"/>
        <end position="310"/>
    </location>
</feature>
<feature type="topological domain" description="Cytoplasmic" evidence="3">
    <location>
        <begin position="311"/>
        <end position="316"/>
    </location>
</feature>
<feature type="short sequence motif" description="Probable selectivity filter" evidence="2">
    <location>
        <begin position="277"/>
        <end position="279"/>
    </location>
</feature>
<feature type="site" description="Essential for ion permeation" evidence="2">
    <location>
        <position position="253"/>
    </location>
</feature>
<keyword id="KW-0997">Cell inner membrane</keyword>
<keyword id="KW-1003">Cell membrane</keyword>
<keyword id="KW-0406">Ion transport</keyword>
<keyword id="KW-0460">Magnesium</keyword>
<keyword id="KW-0472">Membrane</keyword>
<keyword id="KW-0812">Transmembrane</keyword>
<keyword id="KW-1133">Transmembrane helix</keyword>
<keyword id="KW-0813">Transport</keyword>
<proteinExistence type="inferred from homology"/>
<gene>
    <name type="primary">corA</name>
    <name type="ordered locus">STY3607</name>
    <name type="ordered locus">t3345</name>
</gene>
<accession>P0A2R9</accession>
<accession>P31138</accession>
<comment type="function">
    <text evidence="1 2">Mediates influx of magnesium ions (By similarity). Alternates between open and closed states. Activated by low cytoplasmic Mg(2+) levels. Inactive when cytoplasmic Mg(2+) levels are high (By similarity).</text>
</comment>
<comment type="catalytic activity">
    <reaction evidence="1">
        <text>Mg(2+)(in) = Mg(2+)(out)</text>
        <dbReference type="Rhea" id="RHEA:29827"/>
        <dbReference type="ChEBI" id="CHEBI:18420"/>
    </reaction>
</comment>
<comment type="subunit">
    <text evidence="2">Homopentamer. In the absence of Mg(2+), interactions between subunits are weakened, and dimers, trimers and tetramers can be observed in vitro (By similarity).</text>
</comment>
<comment type="subcellular location">
    <subcellularLocation>
        <location evidence="1">Cell inner membrane</location>
        <topology evidence="2">Multi-pass membrane protein</topology>
    </subcellularLocation>
</comment>
<comment type="domain">
    <text evidence="2">The central ion permeation pathway is formed by the first transmembrane domain from each of the five subunits. Mg(2+) binding strengthens interactions between subunits and leads to the formation of a symmetrical homopentamer surrounding a closed ion permeation pathway. Low Mg(2+) concentrations trigger both a conformation change within each subunit and a loosening of the interactions between subunits. This results in an open ion conduction pathway. In addition, this results in a less symmetrical shape of the whole complex.</text>
</comment>
<comment type="similarity">
    <text evidence="4">Belongs to the CorA metal ion transporter (MIT) (TC 1.A.35) family.</text>
</comment>
<reference key="1">
    <citation type="journal article" date="2001" name="Nature">
        <title>Complete genome sequence of a multiple drug resistant Salmonella enterica serovar Typhi CT18.</title>
        <authorList>
            <person name="Parkhill J."/>
            <person name="Dougan G."/>
            <person name="James K.D."/>
            <person name="Thomson N.R."/>
            <person name="Pickard D."/>
            <person name="Wain J."/>
            <person name="Churcher C.M."/>
            <person name="Mungall K.L."/>
            <person name="Bentley S.D."/>
            <person name="Holden M.T.G."/>
            <person name="Sebaihia M."/>
            <person name="Baker S."/>
            <person name="Basham D."/>
            <person name="Brooks K."/>
            <person name="Chillingworth T."/>
            <person name="Connerton P."/>
            <person name="Cronin A."/>
            <person name="Davis P."/>
            <person name="Davies R.M."/>
            <person name="Dowd L."/>
            <person name="White N."/>
            <person name="Farrar J."/>
            <person name="Feltwell T."/>
            <person name="Hamlin N."/>
            <person name="Haque A."/>
            <person name="Hien T.T."/>
            <person name="Holroyd S."/>
            <person name="Jagels K."/>
            <person name="Krogh A."/>
            <person name="Larsen T.S."/>
            <person name="Leather S."/>
            <person name="Moule S."/>
            <person name="O'Gaora P."/>
            <person name="Parry C."/>
            <person name="Quail M.A."/>
            <person name="Rutherford K.M."/>
            <person name="Simmonds M."/>
            <person name="Skelton J."/>
            <person name="Stevens K."/>
            <person name="Whitehead S."/>
            <person name="Barrell B.G."/>
        </authorList>
    </citation>
    <scope>NUCLEOTIDE SEQUENCE [LARGE SCALE GENOMIC DNA]</scope>
    <source>
        <strain>CT18</strain>
    </source>
</reference>
<reference key="2">
    <citation type="journal article" date="2003" name="J. Bacteriol.">
        <title>Comparative genomics of Salmonella enterica serovar Typhi strains Ty2 and CT18.</title>
        <authorList>
            <person name="Deng W."/>
            <person name="Liou S.-R."/>
            <person name="Plunkett G. III"/>
            <person name="Mayhew G.F."/>
            <person name="Rose D.J."/>
            <person name="Burland V."/>
            <person name="Kodoyianni V."/>
            <person name="Schwartz D.C."/>
            <person name="Blattner F.R."/>
        </authorList>
    </citation>
    <scope>NUCLEOTIDE SEQUENCE [LARGE SCALE GENOMIC DNA]</scope>
    <source>
        <strain>ATCC 700931 / Ty2</strain>
    </source>
</reference>
<organism>
    <name type="scientific">Salmonella typhi</name>
    <dbReference type="NCBI Taxonomy" id="90370"/>
    <lineage>
        <taxon>Bacteria</taxon>
        <taxon>Pseudomonadati</taxon>
        <taxon>Pseudomonadota</taxon>
        <taxon>Gammaproteobacteria</taxon>
        <taxon>Enterobacterales</taxon>
        <taxon>Enterobacteriaceae</taxon>
        <taxon>Salmonella</taxon>
    </lineage>
</organism>
<name>CORA_SALTI</name>
<protein>
    <recommendedName>
        <fullName>Magnesium transport protein CorA</fullName>
    </recommendedName>
</protein>
<dbReference type="EMBL" id="AL513382">
    <property type="protein sequence ID" value="CAD07940.1"/>
    <property type="molecule type" value="Genomic_DNA"/>
</dbReference>
<dbReference type="EMBL" id="AE014613">
    <property type="protein sequence ID" value="AAO70873.1"/>
    <property type="molecule type" value="Genomic_DNA"/>
</dbReference>
<dbReference type="RefSeq" id="NP_457799.1">
    <property type="nucleotide sequence ID" value="NC_003198.1"/>
</dbReference>
<dbReference type="RefSeq" id="WP_000947139.1">
    <property type="nucleotide sequence ID" value="NZ_WSUR01000033.1"/>
</dbReference>
<dbReference type="SMR" id="P0A2R9"/>
<dbReference type="STRING" id="220341.gene:17587459"/>
<dbReference type="KEGG" id="stt:t3345"/>
<dbReference type="KEGG" id="sty:STY3607"/>
<dbReference type="PATRIC" id="fig|220341.7.peg.3676"/>
<dbReference type="eggNOG" id="COG0598">
    <property type="taxonomic scope" value="Bacteria"/>
</dbReference>
<dbReference type="HOGENOM" id="CLU_007127_5_0_6"/>
<dbReference type="OMA" id="CMITIHP"/>
<dbReference type="OrthoDB" id="9803416at2"/>
<dbReference type="Proteomes" id="UP000000541">
    <property type="component" value="Chromosome"/>
</dbReference>
<dbReference type="Proteomes" id="UP000002670">
    <property type="component" value="Chromosome"/>
</dbReference>
<dbReference type="GO" id="GO:0005886">
    <property type="term" value="C:plasma membrane"/>
    <property type="evidence" value="ECO:0007669"/>
    <property type="project" value="UniProtKB-SubCell"/>
</dbReference>
<dbReference type="GO" id="GO:0015087">
    <property type="term" value="F:cobalt ion transmembrane transporter activity"/>
    <property type="evidence" value="ECO:0007669"/>
    <property type="project" value="InterPro"/>
</dbReference>
<dbReference type="GO" id="GO:0015095">
    <property type="term" value="F:magnesium ion transmembrane transporter activity"/>
    <property type="evidence" value="ECO:0007669"/>
    <property type="project" value="InterPro"/>
</dbReference>
<dbReference type="GO" id="GO:0015099">
    <property type="term" value="F:nickel cation transmembrane transporter activity"/>
    <property type="evidence" value="ECO:0007669"/>
    <property type="project" value="TreeGrafter"/>
</dbReference>
<dbReference type="CDD" id="cd12835">
    <property type="entry name" value="EcCorA-like_1"/>
    <property type="match status" value="1"/>
</dbReference>
<dbReference type="FunFam" id="1.20.58.340:FF:000001">
    <property type="entry name" value="Magnesium transport protein CorA"/>
    <property type="match status" value="1"/>
</dbReference>
<dbReference type="Gene3D" id="1.20.58.340">
    <property type="entry name" value="Magnesium transport protein CorA, transmembrane region"/>
    <property type="match status" value="1"/>
</dbReference>
<dbReference type="InterPro" id="IPR045861">
    <property type="entry name" value="CorA_cytoplasmic_dom"/>
</dbReference>
<dbReference type="InterPro" id="IPR050829">
    <property type="entry name" value="CorA_MIT"/>
</dbReference>
<dbReference type="InterPro" id="IPR045863">
    <property type="entry name" value="CorA_TM1_TM2"/>
</dbReference>
<dbReference type="InterPro" id="IPR004488">
    <property type="entry name" value="Mg/Co-transport_prot_CorA"/>
</dbReference>
<dbReference type="InterPro" id="IPR002523">
    <property type="entry name" value="MgTranspt_CorA/ZnTranspt_ZntB"/>
</dbReference>
<dbReference type="NCBIfam" id="TIGR00383">
    <property type="entry name" value="corA"/>
    <property type="match status" value="1"/>
</dbReference>
<dbReference type="PANTHER" id="PTHR47685">
    <property type="entry name" value="MAGNESIUM TRANSPORT PROTEIN CORA"/>
    <property type="match status" value="1"/>
</dbReference>
<dbReference type="PANTHER" id="PTHR47685:SF1">
    <property type="entry name" value="MAGNESIUM TRANSPORT PROTEIN CORA"/>
    <property type="match status" value="1"/>
</dbReference>
<dbReference type="Pfam" id="PF01544">
    <property type="entry name" value="CorA"/>
    <property type="match status" value="1"/>
</dbReference>
<dbReference type="SUPFAM" id="SSF143865">
    <property type="entry name" value="CorA soluble domain-like"/>
    <property type="match status" value="1"/>
</dbReference>
<dbReference type="SUPFAM" id="SSF144083">
    <property type="entry name" value="Magnesium transport protein CorA, transmembrane region"/>
    <property type="match status" value="1"/>
</dbReference>
<sequence>MLSAFQLEKNRLTRLEVEESQSLIDAVWVDLVEPDDDERLRVQSELGQSLATRPELEDIEASARFFEDEDGLHIHSFFFFEDAEDHAGNSTVAFTIRDGRLFTLRERELPAFRLYRMRARSQAMVDGNAYELLLDLFETKIEQLADEIENIYSDLEKLSRVIMEGHQGDEYDEALSTLAELEDIGWKVRLCLMDTQRALNFLVRKARLPGGQLEQAREILRDIESLLPHNESLFQKVNFLMQAAMGFINIEQNRIIKIFSVVSVVFLPPTLVASSYGMNFEFMPELKWSFGYPGAIIFMILAGLAPYLYFKRKNWL</sequence>
<evidence type="ECO:0000250" key="1">
    <source>
        <dbReference type="UniProtKB" id="P0ABI4"/>
    </source>
</evidence>
<evidence type="ECO:0000250" key="2">
    <source>
        <dbReference type="UniProtKB" id="Q9WZ31"/>
    </source>
</evidence>
<evidence type="ECO:0000255" key="3"/>
<evidence type="ECO:0000305" key="4"/>